<protein>
    <recommendedName>
        <fullName>Beta-carotene ketolase</fullName>
        <ecNumber>1.14.99.63</ecNumber>
    </recommendedName>
    <alternativeName>
        <fullName>Beta-carotene oxygenase</fullName>
    </alternativeName>
</protein>
<name>CRTW_PARS1</name>
<sequence length="242" mass="26939">MSGRKPGTTGDTIVNLGLTAAILLCWLVLHAFTLWLLDAAAHPLLAVLCLAGLTWLSVGLFIIAHDAMHGSVVPGRPRANAAIGQLALWLYAGFSWPKLIAKHMTHHRHAGTDNDPDFGHGGPVRWYGSFVSTYFGWREGLLLPVIVTTYALILGDRWMYVIFWPVPAVLASIQIFVFGTWLPHRPGHDDFPDRHNARSTGIGDPLSLLTCFHFGGYHHEHHLHPHVPWWRLPRTRKTGGRA</sequence>
<organism>
    <name type="scientific">Paracoccus sp. (strain PC1)</name>
    <name type="common">Alcaligenes sp. (strain PC1)</name>
    <dbReference type="NCBI Taxonomy" id="365615"/>
    <lineage>
        <taxon>Bacteria</taxon>
        <taxon>Pseudomonadati</taxon>
        <taxon>Pseudomonadota</taxon>
        <taxon>Alphaproteobacteria</taxon>
        <taxon>Rhodobacterales</taxon>
        <taxon>Paracoccaceae</taxon>
        <taxon>Paracoccus</taxon>
    </lineage>
</organism>
<comment type="function">
    <text>Converts beta-carotene to canthaxanthin via echinenone.</text>
</comment>
<comment type="catalytic activity">
    <reaction>
        <text>all-trans-beta-carotene + 2 AH2 + 2 O2 = echinenone + 2 A + 3 H2O</text>
        <dbReference type="Rhea" id="RHEA:55660"/>
        <dbReference type="ChEBI" id="CHEBI:4746"/>
        <dbReference type="ChEBI" id="CHEBI:13193"/>
        <dbReference type="ChEBI" id="CHEBI:15377"/>
        <dbReference type="ChEBI" id="CHEBI:15379"/>
        <dbReference type="ChEBI" id="CHEBI:17499"/>
        <dbReference type="ChEBI" id="CHEBI:17579"/>
        <dbReference type="EC" id="1.14.99.63"/>
    </reaction>
</comment>
<comment type="catalytic activity">
    <reaction>
        <text>echinenone + 2 AH2 + 2 O2 = canthaxanthin + 2 A + 3 H2O</text>
        <dbReference type="Rhea" id="RHEA:55664"/>
        <dbReference type="ChEBI" id="CHEBI:3362"/>
        <dbReference type="ChEBI" id="CHEBI:4746"/>
        <dbReference type="ChEBI" id="CHEBI:13193"/>
        <dbReference type="ChEBI" id="CHEBI:15377"/>
        <dbReference type="ChEBI" id="CHEBI:15379"/>
        <dbReference type="ChEBI" id="CHEBI:17499"/>
        <dbReference type="EC" id="1.14.99.63"/>
    </reaction>
</comment>
<comment type="pathway">
    <text>Carotenoid biosynthesis; astaxanthin biosynthesis.</text>
</comment>
<dbReference type="EC" id="1.14.99.63"/>
<dbReference type="EMBL" id="D58422">
    <property type="protein sequence ID" value="BAA09596.1"/>
    <property type="molecule type" value="Genomic_DNA"/>
</dbReference>
<dbReference type="BRENDA" id="1.14.99.63">
    <property type="organism ID" value="15774"/>
</dbReference>
<dbReference type="UniPathway" id="UPA00387"/>
<dbReference type="GO" id="GO:0016491">
    <property type="term" value="F:oxidoreductase activity"/>
    <property type="evidence" value="ECO:0007669"/>
    <property type="project" value="UniProtKB-KW"/>
</dbReference>
<dbReference type="GO" id="GO:0016117">
    <property type="term" value="P:carotenoid biosynthetic process"/>
    <property type="evidence" value="ECO:0007669"/>
    <property type="project" value="UniProtKB-KW"/>
</dbReference>
<dbReference type="InterPro" id="IPR005804">
    <property type="entry name" value="FA_desaturase_dom"/>
</dbReference>
<dbReference type="Pfam" id="PF00487">
    <property type="entry name" value="FA_desaturase"/>
    <property type="match status" value="1"/>
</dbReference>
<feature type="chain" id="PRO_0000079371" description="Beta-carotene ketolase">
    <location>
        <begin position="1"/>
        <end position="242"/>
    </location>
</feature>
<reference key="1">
    <citation type="journal article" date="1995" name="Biochem. Biophys. Res. Commun.">
        <title>Canthaxanthin biosynthesis by the conversion of methylene to keto groups in a hydrocarbon beta-carotene by a single gene.</title>
        <authorList>
            <person name="Misawa N."/>
            <person name="Kajiwara S."/>
            <person name="Kondo K."/>
            <person name="Yokoyama A."/>
            <person name="Satomi Y."/>
            <person name="Saito T."/>
            <person name="Miki W."/>
            <person name="Ohtani T."/>
        </authorList>
    </citation>
    <scope>NUCLEOTIDE SEQUENCE [GENOMIC DNA]</scope>
</reference>
<accession>Q44261</accession>
<keyword id="KW-0125">Carotenoid biosynthesis</keyword>
<keyword id="KW-0560">Oxidoreductase</keyword>
<proteinExistence type="predicted"/>